<evidence type="ECO:0000256" key="1">
    <source>
        <dbReference type="SAM" id="MobiDB-lite"/>
    </source>
</evidence>
<evidence type="ECO:0000269" key="2">
    <source>
    </source>
</evidence>
<evidence type="ECO:0000269" key="3">
    <source>
    </source>
</evidence>
<evidence type="ECO:0000303" key="4">
    <source>
    </source>
</evidence>
<evidence type="ECO:0000305" key="5"/>
<evidence type="ECO:0000305" key="6">
    <source>
    </source>
</evidence>
<sequence length="133" mass="14271">MFRRIVPVLGLALGLGLASQAAMAQEQSPPPPPAVQGTPGKDFTGVSPANLAGIMNYCVEQQYVSYDEGNPVLYGLSEKYKATEQTVGNFDYALGTAGYFDSNGKRFYLVAYTNEDDRRAACHAAVKAAQPML</sequence>
<reference key="1">
    <citation type="journal article" date="1997" name="Appl. Environ. Microbiol.">
        <title>Characterization of the genes encoding the three-component membrane-bound alcohol dehydrogenase from Gluconobacter suboxydans and their expression in Acetobacter pasteurianus.</title>
        <authorList>
            <person name="Kondo K."/>
            <person name="Horinouchi S."/>
        </authorList>
    </citation>
    <scope>NUCLEOTIDE SEQUENCE [GENOMIC DNA]</scope>
    <scope>PROTEIN SEQUENCE OF 25-40</scope>
    <scope>FUNCTION</scope>
    <scope>PYROGLUTAMATE FORMATION AT GLN-25</scope>
    <scope>SUBUNIT</scope>
    <source>
        <strain>ATCC 621 / DSM 50049 / NBRC 3172 / NCIMB 7069 / NRRL B-72</strain>
    </source>
</reference>
<reference key="2">
    <citation type="journal article" date="2005" name="Nat. Biotechnol.">
        <title>Complete genome sequence of the acetic acid bacterium Gluconobacter oxydans.</title>
        <authorList>
            <person name="Prust C."/>
            <person name="Hoffmeister M."/>
            <person name="Liesegang H."/>
            <person name="Wiezer A."/>
            <person name="Fricke W.F."/>
            <person name="Ehrenreich A."/>
            <person name="Gottschalk G."/>
            <person name="Deppenmeier U."/>
        </authorList>
    </citation>
    <scope>NUCLEOTIDE SEQUENCE [LARGE SCALE GENOMIC DNA]</scope>
    <source>
        <strain>621H</strain>
    </source>
</reference>
<reference key="3">
    <citation type="journal article" date="1996" name="J. Biol. Chem.">
        <title>Function of multiple heme c moieties in intramolecular electron transport and ubiquinone reduction in the quinohemoprotein alcohol dehydrogenase-cytochrome c complex of Gluconobacter suboxydans.</title>
        <authorList>
            <person name="Matsushita K."/>
            <person name="Yakushi T."/>
            <person name="Toyama H."/>
            <person name="Shinagawa E."/>
            <person name="Adachi O."/>
        </authorList>
    </citation>
    <scope>PROTEIN SEQUENCE OF N-TERMINUS</scope>
    <scope>FUNCTION</scope>
    <scope>SUBUNIT</scope>
</reference>
<gene>
    <name evidence="4" type="primary">adhS</name>
    <name type="ordered locus">GOX0756</name>
</gene>
<accession>O05544</accession>
<accession>Q5FSW4</accession>
<keyword id="KW-0002">3D-structure</keyword>
<keyword id="KW-1003">Cell membrane</keyword>
<keyword id="KW-0903">Direct protein sequencing</keyword>
<keyword id="KW-0472">Membrane</keyword>
<keyword id="KW-0873">Pyrrolidone carboxylic acid</keyword>
<keyword id="KW-1185">Reference proteome</keyword>
<keyword id="KW-0732">Signal</keyword>
<name>ADHS_GLUOX</name>
<proteinExistence type="evidence at protein level"/>
<protein>
    <recommendedName>
        <fullName evidence="4">Alcohol dehydrogenase, 15 kDa subunit</fullName>
    </recommendedName>
    <alternativeName>
        <fullName evidence="4">Alcohol dehydrogenase (quinone), subunit III</fullName>
    </alternativeName>
    <alternativeName>
        <fullName evidence="4">G3-ADH subunit III</fullName>
    </alternativeName>
</protein>
<organism>
    <name type="scientific">Gluconobacter oxydans (strain 621H)</name>
    <name type="common">Gluconobacter suboxydans</name>
    <dbReference type="NCBI Taxonomy" id="290633"/>
    <lineage>
        <taxon>Bacteria</taxon>
        <taxon>Pseudomonadati</taxon>
        <taxon>Pseudomonadota</taxon>
        <taxon>Alphaproteobacteria</taxon>
        <taxon>Acetobacterales</taxon>
        <taxon>Acetobacteraceae</taxon>
        <taxon>Gluconobacter</taxon>
    </lineage>
</organism>
<dbReference type="EMBL" id="D86440">
    <property type="protein sequence ID" value="BAA19756.1"/>
    <property type="status" value="ALT_FRAME"/>
    <property type="molecule type" value="Genomic_DNA"/>
</dbReference>
<dbReference type="EMBL" id="CP000009">
    <property type="protein sequence ID" value="AAW60532.1"/>
    <property type="molecule type" value="Genomic_DNA"/>
</dbReference>
<dbReference type="RefSeq" id="WP_011252329.1">
    <property type="nucleotide sequence ID" value="NZ_LT900338.1"/>
</dbReference>
<dbReference type="PDB" id="8GY2">
    <property type="method" value="EM"/>
    <property type="resolution" value="2.50 A"/>
    <property type="chains" value="C=1-133"/>
</dbReference>
<dbReference type="PDBsum" id="8GY2"/>
<dbReference type="EMDB" id="EMD-34368"/>
<dbReference type="SMR" id="O05544"/>
<dbReference type="STRING" id="290633.GOX0756"/>
<dbReference type="GeneID" id="56905074"/>
<dbReference type="KEGG" id="gox:GOX0756"/>
<dbReference type="HOGENOM" id="CLU_1747226_0_0_5"/>
<dbReference type="BioCyc" id="MetaCyc:MONOMER-15244"/>
<dbReference type="Proteomes" id="UP000006375">
    <property type="component" value="Chromosome"/>
</dbReference>
<dbReference type="GO" id="GO:0005886">
    <property type="term" value="C:plasma membrane"/>
    <property type="evidence" value="ECO:0007669"/>
    <property type="project" value="UniProtKB-SubCell"/>
</dbReference>
<comment type="function">
    <text evidence="2 3">Part of the alcohol dehydrogenase multicomponent enzyme system which is involved in the production of acetic acid and in the ethanol oxidase respiratory chain. Does not play an obligatory role for the alcohol dehydrogenase (ADH) activity.</text>
</comment>
<comment type="subunit">
    <text evidence="2 3">The alcohol dehydrogenase multicomponent enzyme system is composed of a dehydrogenase subunit I (AdhA), a cytochrome c subunit II (AdhB) and a subunit III (AdhS).</text>
</comment>
<comment type="subcellular location">
    <subcellularLocation>
        <location evidence="5">Cell membrane</location>
        <topology evidence="5">Peripheral membrane protein</topology>
        <orientation evidence="5">Periplasmic side</orientation>
    </subcellularLocation>
</comment>
<comment type="sequence caution" evidence="5">
    <conflict type="frameshift">
        <sequence resource="EMBL-CDS" id="BAA19756"/>
    </conflict>
</comment>
<feature type="signal peptide" evidence="3 6">
    <location>
        <begin position="1"/>
        <end position="24"/>
    </location>
</feature>
<feature type="chain" id="PRO_0000020626" description="Alcohol dehydrogenase, 15 kDa subunit">
    <location>
        <begin position="25"/>
        <end position="133"/>
    </location>
</feature>
<feature type="region of interest" description="Disordered" evidence="1">
    <location>
        <begin position="23"/>
        <end position="43"/>
    </location>
</feature>
<feature type="modified residue" description="Pyrrolidone carboxylic acid" evidence="3">
    <location>
        <position position="25"/>
    </location>
</feature>
<feature type="sequence conflict" description="In Ref. 1; AA sequence." evidence="5" ref="1">
    <original>GIMNYCVEQQYVSYDEGNPVLYGLSEKYKATEQTVGNFDYALG</original>
    <variation>DITKNTAENNNISHKKNKTRPYTRREKNKTTQNTRAKTDNTRA</variation>
    <location>
        <begin position="53"/>
        <end position="95"/>
    </location>
</feature>